<name>PYRE_PSEPK</name>
<protein>
    <recommendedName>
        <fullName evidence="1">Orotate phosphoribosyltransferase</fullName>
        <shortName evidence="1">OPRT</shortName>
        <shortName evidence="1">OPRTase</shortName>
        <ecNumber evidence="1">2.4.2.10</ecNumber>
    </recommendedName>
</protein>
<organism>
    <name type="scientific">Pseudomonas putida (strain ATCC 47054 / DSM 6125 / CFBP 8728 / NCIMB 11950 / KT2440)</name>
    <dbReference type="NCBI Taxonomy" id="160488"/>
    <lineage>
        <taxon>Bacteria</taxon>
        <taxon>Pseudomonadati</taxon>
        <taxon>Pseudomonadota</taxon>
        <taxon>Gammaproteobacteria</taxon>
        <taxon>Pseudomonadales</taxon>
        <taxon>Pseudomonadaceae</taxon>
        <taxon>Pseudomonas</taxon>
    </lineage>
</organism>
<evidence type="ECO:0000255" key="1">
    <source>
        <dbReference type="HAMAP-Rule" id="MF_01208"/>
    </source>
</evidence>
<accession>Q88C92</accession>
<keyword id="KW-0328">Glycosyltransferase</keyword>
<keyword id="KW-0460">Magnesium</keyword>
<keyword id="KW-0665">Pyrimidine biosynthesis</keyword>
<keyword id="KW-1185">Reference proteome</keyword>
<keyword id="KW-0808">Transferase</keyword>
<comment type="function">
    <text evidence="1">Catalyzes the transfer of a ribosyl phosphate group from 5-phosphoribose 1-diphosphate to orotate, leading to the formation of orotidine monophosphate (OMP).</text>
</comment>
<comment type="catalytic activity">
    <reaction evidence="1">
        <text>orotidine 5'-phosphate + diphosphate = orotate + 5-phospho-alpha-D-ribose 1-diphosphate</text>
        <dbReference type="Rhea" id="RHEA:10380"/>
        <dbReference type="ChEBI" id="CHEBI:30839"/>
        <dbReference type="ChEBI" id="CHEBI:33019"/>
        <dbReference type="ChEBI" id="CHEBI:57538"/>
        <dbReference type="ChEBI" id="CHEBI:58017"/>
        <dbReference type="EC" id="2.4.2.10"/>
    </reaction>
</comment>
<comment type="cofactor">
    <cofactor evidence="1">
        <name>Mg(2+)</name>
        <dbReference type="ChEBI" id="CHEBI:18420"/>
    </cofactor>
</comment>
<comment type="pathway">
    <text evidence="1">Pyrimidine metabolism; UMP biosynthesis via de novo pathway; UMP from orotate: step 1/2.</text>
</comment>
<comment type="subunit">
    <text evidence="1">Homodimer.</text>
</comment>
<comment type="similarity">
    <text evidence="1">Belongs to the purine/pyrimidine phosphoribosyltransferase family. PyrE subfamily.</text>
</comment>
<gene>
    <name evidence="1" type="primary">pyrE</name>
    <name type="ordered locus">PP_5291</name>
</gene>
<reference key="1">
    <citation type="journal article" date="2002" name="Environ. Microbiol.">
        <title>Complete genome sequence and comparative analysis of the metabolically versatile Pseudomonas putida KT2440.</title>
        <authorList>
            <person name="Nelson K.E."/>
            <person name="Weinel C."/>
            <person name="Paulsen I.T."/>
            <person name="Dodson R.J."/>
            <person name="Hilbert H."/>
            <person name="Martins dos Santos V.A.P."/>
            <person name="Fouts D.E."/>
            <person name="Gill S.R."/>
            <person name="Pop M."/>
            <person name="Holmes M."/>
            <person name="Brinkac L.M."/>
            <person name="Beanan M.J."/>
            <person name="DeBoy R.T."/>
            <person name="Daugherty S.C."/>
            <person name="Kolonay J.F."/>
            <person name="Madupu R."/>
            <person name="Nelson W.C."/>
            <person name="White O."/>
            <person name="Peterson J.D."/>
            <person name="Khouri H.M."/>
            <person name="Hance I."/>
            <person name="Chris Lee P."/>
            <person name="Holtzapple E.K."/>
            <person name="Scanlan D."/>
            <person name="Tran K."/>
            <person name="Moazzez A."/>
            <person name="Utterback T.R."/>
            <person name="Rizzo M."/>
            <person name="Lee K."/>
            <person name="Kosack D."/>
            <person name="Moestl D."/>
            <person name="Wedler H."/>
            <person name="Lauber J."/>
            <person name="Stjepandic D."/>
            <person name="Hoheisel J."/>
            <person name="Straetz M."/>
            <person name="Heim S."/>
            <person name="Kiewitz C."/>
            <person name="Eisen J.A."/>
            <person name="Timmis K.N."/>
            <person name="Duesterhoeft A."/>
            <person name="Tuemmler B."/>
            <person name="Fraser C.M."/>
        </authorList>
    </citation>
    <scope>NUCLEOTIDE SEQUENCE [LARGE SCALE GENOMIC DNA]</scope>
    <source>
        <strain>ATCC 47054 / DSM 6125 / CFBP 8728 / NCIMB 11950 / KT2440</strain>
    </source>
</reference>
<sequence length="213" mass="23079">MQPYQRDFIRFAIDRGVLRFGEFTLKSGRTSPYFFNAGLFNTGSALAELGRCYAAAIVDSKIPFDVLFGPAYKGIPLAATTAVALADQHQLDVPWCFNRKEAKDHGEGGSLVGAPLAGDVLIIDDVITAGTAIREVMQIINAQQAKAAGVLIALNREERGNGELSAIQEVERDFGIPVVSIVSLTQVLEFLADDPQLKQHLPAVEAYRAQYGI</sequence>
<feature type="chain" id="PRO_0000110725" description="Orotate phosphoribosyltransferase">
    <location>
        <begin position="1"/>
        <end position="213"/>
    </location>
</feature>
<feature type="binding site" description="in other chain" evidence="1">
    <location>
        <position position="26"/>
    </location>
    <ligand>
        <name>5-phospho-alpha-D-ribose 1-diphosphate</name>
        <dbReference type="ChEBI" id="CHEBI:58017"/>
        <note>ligand shared between dimeric partners</note>
    </ligand>
</feature>
<feature type="binding site" evidence="1">
    <location>
        <begin position="34"/>
        <end position="35"/>
    </location>
    <ligand>
        <name>orotate</name>
        <dbReference type="ChEBI" id="CHEBI:30839"/>
    </ligand>
</feature>
<feature type="binding site" description="in other chain" evidence="1">
    <location>
        <begin position="72"/>
        <end position="73"/>
    </location>
    <ligand>
        <name>5-phospho-alpha-D-ribose 1-diphosphate</name>
        <dbReference type="ChEBI" id="CHEBI:58017"/>
        <note>ligand shared between dimeric partners</note>
    </ligand>
</feature>
<feature type="binding site" evidence="1">
    <location>
        <position position="99"/>
    </location>
    <ligand>
        <name>5-phospho-alpha-D-ribose 1-diphosphate</name>
        <dbReference type="ChEBI" id="CHEBI:58017"/>
        <note>ligand shared between dimeric partners</note>
    </ligand>
</feature>
<feature type="binding site" description="in other chain" evidence="1">
    <location>
        <position position="100"/>
    </location>
    <ligand>
        <name>5-phospho-alpha-D-ribose 1-diphosphate</name>
        <dbReference type="ChEBI" id="CHEBI:58017"/>
        <note>ligand shared between dimeric partners</note>
    </ligand>
</feature>
<feature type="binding site" evidence="1">
    <location>
        <position position="103"/>
    </location>
    <ligand>
        <name>5-phospho-alpha-D-ribose 1-diphosphate</name>
        <dbReference type="ChEBI" id="CHEBI:58017"/>
        <note>ligand shared between dimeric partners</note>
    </ligand>
</feature>
<feature type="binding site" evidence="1">
    <location>
        <position position="105"/>
    </location>
    <ligand>
        <name>5-phospho-alpha-D-ribose 1-diphosphate</name>
        <dbReference type="ChEBI" id="CHEBI:58017"/>
        <note>ligand shared between dimeric partners</note>
    </ligand>
</feature>
<feature type="binding site" description="in other chain" evidence="1">
    <location>
        <begin position="124"/>
        <end position="132"/>
    </location>
    <ligand>
        <name>5-phospho-alpha-D-ribose 1-diphosphate</name>
        <dbReference type="ChEBI" id="CHEBI:58017"/>
        <note>ligand shared between dimeric partners</note>
    </ligand>
</feature>
<feature type="binding site" evidence="1">
    <location>
        <position position="128"/>
    </location>
    <ligand>
        <name>orotate</name>
        <dbReference type="ChEBI" id="CHEBI:30839"/>
    </ligand>
</feature>
<feature type="binding site" evidence="1">
    <location>
        <position position="156"/>
    </location>
    <ligand>
        <name>orotate</name>
        <dbReference type="ChEBI" id="CHEBI:30839"/>
    </ligand>
</feature>
<proteinExistence type="inferred from homology"/>
<dbReference type="EC" id="2.4.2.10" evidence="1"/>
<dbReference type="EMBL" id="AE015451">
    <property type="protein sequence ID" value="AAN70856.1"/>
    <property type="molecule type" value="Genomic_DNA"/>
</dbReference>
<dbReference type="RefSeq" id="NP_747392.1">
    <property type="nucleotide sequence ID" value="NC_002947.4"/>
</dbReference>
<dbReference type="RefSeq" id="WP_003253405.1">
    <property type="nucleotide sequence ID" value="NZ_CP169744.1"/>
</dbReference>
<dbReference type="SMR" id="Q88C92"/>
<dbReference type="STRING" id="160488.PP_5291"/>
<dbReference type="PaxDb" id="160488-PP_5291"/>
<dbReference type="GeneID" id="97170659"/>
<dbReference type="KEGG" id="ppu:PP_5291"/>
<dbReference type="PATRIC" id="fig|160488.4.peg.5643"/>
<dbReference type="eggNOG" id="COG0461">
    <property type="taxonomic scope" value="Bacteria"/>
</dbReference>
<dbReference type="HOGENOM" id="CLU_074878_0_1_6"/>
<dbReference type="OrthoDB" id="9779060at2"/>
<dbReference type="PhylomeDB" id="Q88C92"/>
<dbReference type="BioCyc" id="PPUT160488:G1G01-5648-MONOMER"/>
<dbReference type="UniPathway" id="UPA00070">
    <property type="reaction ID" value="UER00119"/>
</dbReference>
<dbReference type="Proteomes" id="UP000000556">
    <property type="component" value="Chromosome"/>
</dbReference>
<dbReference type="GO" id="GO:0005737">
    <property type="term" value="C:cytoplasm"/>
    <property type="evidence" value="ECO:0007669"/>
    <property type="project" value="TreeGrafter"/>
</dbReference>
<dbReference type="GO" id="GO:0000287">
    <property type="term" value="F:magnesium ion binding"/>
    <property type="evidence" value="ECO:0007669"/>
    <property type="project" value="UniProtKB-UniRule"/>
</dbReference>
<dbReference type="GO" id="GO:0004588">
    <property type="term" value="F:orotate phosphoribosyltransferase activity"/>
    <property type="evidence" value="ECO:0007669"/>
    <property type="project" value="UniProtKB-UniRule"/>
</dbReference>
<dbReference type="GO" id="GO:0006207">
    <property type="term" value="P:'de novo' pyrimidine nucleobase biosynthetic process"/>
    <property type="evidence" value="ECO:0007669"/>
    <property type="project" value="TreeGrafter"/>
</dbReference>
<dbReference type="GO" id="GO:0044205">
    <property type="term" value="P:'de novo' UMP biosynthetic process"/>
    <property type="evidence" value="ECO:0007669"/>
    <property type="project" value="UniProtKB-UniRule"/>
</dbReference>
<dbReference type="GO" id="GO:0046132">
    <property type="term" value="P:pyrimidine ribonucleoside biosynthetic process"/>
    <property type="evidence" value="ECO:0007669"/>
    <property type="project" value="TreeGrafter"/>
</dbReference>
<dbReference type="CDD" id="cd06223">
    <property type="entry name" value="PRTases_typeI"/>
    <property type="match status" value="1"/>
</dbReference>
<dbReference type="FunFam" id="3.40.50.2020:FF:000008">
    <property type="entry name" value="Orotate phosphoribosyltransferase"/>
    <property type="match status" value="1"/>
</dbReference>
<dbReference type="Gene3D" id="3.40.50.2020">
    <property type="match status" value="1"/>
</dbReference>
<dbReference type="HAMAP" id="MF_01208">
    <property type="entry name" value="PyrE"/>
    <property type="match status" value="1"/>
</dbReference>
<dbReference type="InterPro" id="IPR023031">
    <property type="entry name" value="OPRT"/>
</dbReference>
<dbReference type="InterPro" id="IPR004467">
    <property type="entry name" value="Or_phspho_trans_dom"/>
</dbReference>
<dbReference type="InterPro" id="IPR000836">
    <property type="entry name" value="PRibTrfase_dom"/>
</dbReference>
<dbReference type="InterPro" id="IPR029057">
    <property type="entry name" value="PRTase-like"/>
</dbReference>
<dbReference type="NCBIfam" id="TIGR00336">
    <property type="entry name" value="pyrE"/>
    <property type="match status" value="1"/>
</dbReference>
<dbReference type="PANTHER" id="PTHR46683">
    <property type="entry name" value="OROTATE PHOSPHORIBOSYLTRANSFERASE 1-RELATED"/>
    <property type="match status" value="1"/>
</dbReference>
<dbReference type="PANTHER" id="PTHR46683:SF1">
    <property type="entry name" value="OROTATE PHOSPHORIBOSYLTRANSFERASE 1-RELATED"/>
    <property type="match status" value="1"/>
</dbReference>
<dbReference type="Pfam" id="PF00156">
    <property type="entry name" value="Pribosyltran"/>
    <property type="match status" value="1"/>
</dbReference>
<dbReference type="SUPFAM" id="SSF53271">
    <property type="entry name" value="PRTase-like"/>
    <property type="match status" value="1"/>
</dbReference>
<dbReference type="PROSITE" id="PS00103">
    <property type="entry name" value="PUR_PYR_PR_TRANSFER"/>
    <property type="match status" value="1"/>
</dbReference>